<gene>
    <name type="ordered locus">Psyr_4257</name>
</gene>
<comment type="subcellular location">
    <subcellularLocation>
        <location evidence="1">Cell membrane</location>
        <topology evidence="1">Multi-pass membrane protein</topology>
    </subcellularLocation>
</comment>
<comment type="similarity">
    <text evidence="1">Belongs to the UPF0114 family.</text>
</comment>
<sequence>MERFFENAMYASRWLLAPIYFGLSLGLLALCLKFFQEIFHVIPNIFSLAEADLILVLLSLIDMALVGGLLVMVMISGYENFVSQLDIDEDKEKLNWLGTMDSSSLKMKVAASIVAISSIHLLRVFMDATNIKPEYLMWYVIIHMTFVISAFAMGYLDKVTKH</sequence>
<reference key="1">
    <citation type="journal article" date="2005" name="Proc. Natl. Acad. Sci. U.S.A.">
        <title>Comparison of the complete genome sequences of Pseudomonas syringae pv. syringae B728a and pv. tomato DC3000.</title>
        <authorList>
            <person name="Feil H."/>
            <person name="Feil W.S."/>
            <person name="Chain P."/>
            <person name="Larimer F."/>
            <person name="Dibartolo G."/>
            <person name="Copeland A."/>
            <person name="Lykidis A."/>
            <person name="Trong S."/>
            <person name="Nolan M."/>
            <person name="Goltsman E."/>
            <person name="Thiel J."/>
            <person name="Malfatti S."/>
            <person name="Loper J.E."/>
            <person name="Lapidus A."/>
            <person name="Detter J.C."/>
            <person name="Land M."/>
            <person name="Richardson P.M."/>
            <person name="Kyrpides N.C."/>
            <person name="Ivanova N."/>
            <person name="Lindow S.E."/>
        </authorList>
    </citation>
    <scope>NUCLEOTIDE SEQUENCE [LARGE SCALE GENOMIC DNA]</scope>
    <source>
        <strain>B728a</strain>
    </source>
</reference>
<protein>
    <recommendedName>
        <fullName evidence="1">UPF0114 protein Psyr_4257</fullName>
    </recommendedName>
</protein>
<evidence type="ECO:0000255" key="1">
    <source>
        <dbReference type="HAMAP-Rule" id="MF_00143"/>
    </source>
</evidence>
<feature type="chain" id="PRO_1000009486" description="UPF0114 protein Psyr_4257">
    <location>
        <begin position="1"/>
        <end position="162"/>
    </location>
</feature>
<feature type="transmembrane region" description="Helical" evidence="1">
    <location>
        <begin position="15"/>
        <end position="35"/>
    </location>
</feature>
<feature type="transmembrane region" description="Helical" evidence="1">
    <location>
        <begin position="53"/>
        <end position="73"/>
    </location>
</feature>
<feature type="transmembrane region" description="Helical" evidence="1">
    <location>
        <begin position="109"/>
        <end position="129"/>
    </location>
</feature>
<feature type="transmembrane region" description="Helical" evidence="1">
    <location>
        <begin position="136"/>
        <end position="156"/>
    </location>
</feature>
<dbReference type="EMBL" id="CP000075">
    <property type="protein sequence ID" value="AAY39287.1"/>
    <property type="molecule type" value="Genomic_DNA"/>
</dbReference>
<dbReference type="RefSeq" id="WP_003313787.1">
    <property type="nucleotide sequence ID" value="NC_007005.1"/>
</dbReference>
<dbReference type="RefSeq" id="YP_237325.1">
    <property type="nucleotide sequence ID" value="NC_007005.1"/>
</dbReference>
<dbReference type="STRING" id="205918.Psyr_4257"/>
<dbReference type="KEGG" id="psb:Psyr_4257"/>
<dbReference type="PATRIC" id="fig|205918.7.peg.4392"/>
<dbReference type="eggNOG" id="COG2862">
    <property type="taxonomic scope" value="Bacteria"/>
</dbReference>
<dbReference type="HOGENOM" id="CLU_097887_1_1_6"/>
<dbReference type="OrthoDB" id="9783569at2"/>
<dbReference type="Proteomes" id="UP000000426">
    <property type="component" value="Chromosome"/>
</dbReference>
<dbReference type="GO" id="GO:0005886">
    <property type="term" value="C:plasma membrane"/>
    <property type="evidence" value="ECO:0007669"/>
    <property type="project" value="UniProtKB-SubCell"/>
</dbReference>
<dbReference type="HAMAP" id="MF_00143">
    <property type="entry name" value="UPF0114"/>
    <property type="match status" value="1"/>
</dbReference>
<dbReference type="InterPro" id="IPR005134">
    <property type="entry name" value="UPF0114"/>
</dbReference>
<dbReference type="InterPro" id="IPR020761">
    <property type="entry name" value="UPF0114_bac"/>
</dbReference>
<dbReference type="NCBIfam" id="TIGR00645">
    <property type="entry name" value="HI0507"/>
    <property type="match status" value="1"/>
</dbReference>
<dbReference type="PANTHER" id="PTHR38596">
    <property type="entry name" value="UPF0114 PROTEIN YQHA"/>
    <property type="match status" value="1"/>
</dbReference>
<dbReference type="PANTHER" id="PTHR38596:SF1">
    <property type="entry name" value="UPF0114 PROTEIN YQHA"/>
    <property type="match status" value="1"/>
</dbReference>
<dbReference type="Pfam" id="PF03350">
    <property type="entry name" value="UPF0114"/>
    <property type="match status" value="1"/>
</dbReference>
<name>Y4257_PSEU2</name>
<proteinExistence type="inferred from homology"/>
<organism>
    <name type="scientific">Pseudomonas syringae pv. syringae (strain B728a)</name>
    <dbReference type="NCBI Taxonomy" id="205918"/>
    <lineage>
        <taxon>Bacteria</taxon>
        <taxon>Pseudomonadati</taxon>
        <taxon>Pseudomonadota</taxon>
        <taxon>Gammaproteobacteria</taxon>
        <taxon>Pseudomonadales</taxon>
        <taxon>Pseudomonadaceae</taxon>
        <taxon>Pseudomonas</taxon>
        <taxon>Pseudomonas syringae</taxon>
    </lineage>
</organism>
<keyword id="KW-1003">Cell membrane</keyword>
<keyword id="KW-0472">Membrane</keyword>
<keyword id="KW-0812">Transmembrane</keyword>
<keyword id="KW-1133">Transmembrane helix</keyword>
<accession>Q4ZNI5</accession>